<name>MURG_ECOLI</name>
<comment type="function">
    <text evidence="3 4">Cell wall formation (PubMed:1649817). Catalyzes the transfer of a GlcNAc subunit on undecaprenyl-pyrophosphoryl-MurNAc-pentapeptide (lipid intermediate I) to form undecaprenyl-pyrophosphoryl-MurNAc-(pentapeptide)GlcNAc (lipid intermediate II) (PubMed:12538870, PubMed:1649817). Strongly prefers UDP to CDP, GDP, ADP and TDP (PubMed:12538870).</text>
</comment>
<comment type="catalytic activity">
    <reaction evidence="1 2 3 4">
        <text>di-trans,octa-cis-undecaprenyl diphospho-N-acetyl-alpha-D-muramoyl-L-alanyl-D-glutamyl-meso-2,6-diaminopimeloyl-D-alanyl-D-alanine + UDP-N-acetyl-alpha-D-glucosamine = di-trans,octa-cis-undecaprenyl diphospho-[N-acetyl-alpha-D-glucosaminyl-(1-&gt;4)]-N-acetyl-alpha-D-muramoyl-L-alanyl-D-glutamyl-meso-2,6-diaminopimeloyl-D-alanyl-D-alanine + UDP + H(+)</text>
        <dbReference type="Rhea" id="RHEA:31227"/>
        <dbReference type="ChEBI" id="CHEBI:15378"/>
        <dbReference type="ChEBI" id="CHEBI:57705"/>
        <dbReference type="ChEBI" id="CHEBI:58223"/>
        <dbReference type="ChEBI" id="CHEBI:61387"/>
        <dbReference type="ChEBI" id="CHEBI:61388"/>
        <dbReference type="EC" id="2.4.1.227"/>
    </reaction>
</comment>
<comment type="biophysicochemical properties">
    <kinetics>
        <KM evidence="3">0.053 mM for lipid I</KM>
        <KM evidence="3">0.053 mM for UDP-N-acetyl-alpha-D-glucosamine</KM>
        <text evidence="3">kcat is 837 min(-1).</text>
    </kinetics>
</comment>
<comment type="pathway">
    <text evidence="1 4">Cell wall biogenesis; peptidoglycan biosynthesis.</text>
</comment>
<comment type="subunit">
    <text evidence="3 5">Homodimer (PubMed:12538870). Associates with MreB and MraY (PubMed:17640276).</text>
</comment>
<comment type="interaction">
    <interactant intactId="EBI-554881">
        <id>P17443</id>
    </interactant>
    <interactant intactId="EBI-547368">
        <id>P0AGJ5</id>
        <label>yfiF</label>
    </interactant>
    <organismsDiffer>false</organismsDiffer>
    <experiments>3</experiments>
</comment>
<comment type="subcellular location">
    <subcellularLocation>
        <location evidence="1 4 5 6">Cell inner membrane</location>
        <topology evidence="1 4 5 6">Peripheral membrane protein</topology>
        <orientation evidence="1 6">Cytoplasmic side</orientation>
    </subcellularLocation>
    <text evidence="5">Randomly distributed in the cell envelope with a higher intensity at the division site. Mid-cell localization requires divisome components.</text>
</comment>
<comment type="disruption phenotype">
    <text evidence="4">Inactivation of the gene rapidly inhibits peptidoglycan synthesis in exponentially growing cells.</text>
</comment>
<comment type="similarity">
    <text evidence="1">Belongs to the glycosyltransferase 28 family. MurG subfamily.</text>
</comment>
<protein>
    <recommendedName>
        <fullName evidence="1">UDP-N-acetylglucosamine--N-acetylmuramyl-(pentapeptide) pyrophosphoryl-undecaprenol N-acetylglucosamine transferase</fullName>
        <ecNumber evidence="1 2 4">2.4.1.227</ecNumber>
    </recommendedName>
    <alternativeName>
        <fullName evidence="1">Undecaprenyl-PP-MurNAc-pentapeptide-UDPGlcNAc GlcNAc transferase</fullName>
    </alternativeName>
</protein>
<proteinExistence type="evidence at protein level"/>
<accession>P17443</accession>
<sequence>MSGQGKRLMVMAGGTGGHVFPGLAVAHHLMAQGWQVRWLGTADRMEADLVPKHGIEIDFIRISGLRGKGIKALIAAPLRIFNAWRQARAIMKAYKPDVVLGMGGYVSGPGGLAAWSLGIPVVLHEQNGIAGLTNKWLAKIATKVMQAFPGAFPNAEVVGNPVRTDVLALPLPQQRLAGREGPVRVLVVGGSQGARILNQTMPQVAAKLGDSVTIWHQSGKGSQQSVEQAYAEAGQPQHKVTEFIDDMAAAYAWADVVVCRSGALTVSEIAAAGLPALFVPFQHKDRQQYWNALPLEKAGAAKIIEQPQLSVDAVANTLAGWSRETLLTMAERARAASIPDATERVANEVSRVARA</sequence>
<keyword id="KW-0002">3D-structure</keyword>
<keyword id="KW-0131">Cell cycle</keyword>
<keyword id="KW-0132">Cell division</keyword>
<keyword id="KW-0997">Cell inner membrane</keyword>
<keyword id="KW-1003">Cell membrane</keyword>
<keyword id="KW-0133">Cell shape</keyword>
<keyword id="KW-0961">Cell wall biogenesis/degradation</keyword>
<keyword id="KW-0903">Direct protein sequencing</keyword>
<keyword id="KW-0328">Glycosyltransferase</keyword>
<keyword id="KW-0472">Membrane</keyword>
<keyword id="KW-0573">Peptidoglycan synthesis</keyword>
<keyword id="KW-1185">Reference proteome</keyword>
<keyword id="KW-0808">Transferase</keyword>
<evidence type="ECO:0000255" key="1">
    <source>
        <dbReference type="HAMAP-Rule" id="MF_00033"/>
    </source>
</evidence>
<evidence type="ECO:0000269" key="2">
    <source>
    </source>
</evidence>
<evidence type="ECO:0000269" key="3">
    <source>
    </source>
</evidence>
<evidence type="ECO:0000269" key="4">
    <source>
    </source>
</evidence>
<evidence type="ECO:0000269" key="5">
    <source>
    </source>
</evidence>
<evidence type="ECO:0000269" key="6">
    <source>
    </source>
</evidence>
<evidence type="ECO:0000303" key="7">
    <source>
    </source>
</evidence>
<evidence type="ECO:0007744" key="8">
    <source>
        <dbReference type="PDB" id="1F0K"/>
    </source>
</evidence>
<evidence type="ECO:0007744" key="9">
    <source>
        <dbReference type="PDB" id="1NLM"/>
    </source>
</evidence>
<evidence type="ECO:0007829" key="10">
    <source>
        <dbReference type="PDB" id="1F0K"/>
    </source>
</evidence>
<evidence type="ECO:0007829" key="11">
    <source>
        <dbReference type="PDB" id="1NLM"/>
    </source>
</evidence>
<gene>
    <name evidence="1 7" type="primary">murG</name>
    <name type="ordered locus">b0090</name>
    <name type="ordered locus">JW0088</name>
</gene>
<dbReference type="EC" id="2.4.1.227" evidence="1 2 4"/>
<dbReference type="EMBL" id="X52644">
    <property type="protein sequence ID" value="CAA36867.1"/>
    <property type="molecule type" value="Genomic_DNA"/>
</dbReference>
<dbReference type="EMBL" id="X52540">
    <property type="protein sequence ID" value="CAA36776.1"/>
    <property type="molecule type" value="Genomic_DNA"/>
</dbReference>
<dbReference type="EMBL" id="X55034">
    <property type="protein sequence ID" value="CAA38867.1"/>
    <property type="molecule type" value="Genomic_DNA"/>
</dbReference>
<dbReference type="EMBL" id="U00096">
    <property type="protein sequence ID" value="AAC73201.1"/>
    <property type="molecule type" value="Genomic_DNA"/>
</dbReference>
<dbReference type="EMBL" id="AP009048">
    <property type="protein sequence ID" value="BAB96658.1"/>
    <property type="molecule type" value="Genomic_DNA"/>
</dbReference>
<dbReference type="PIR" id="JQ0544">
    <property type="entry name" value="BVECMG"/>
</dbReference>
<dbReference type="RefSeq" id="NP_414632.1">
    <property type="nucleotide sequence ID" value="NC_000913.3"/>
</dbReference>
<dbReference type="RefSeq" id="WP_000016560.1">
    <property type="nucleotide sequence ID" value="NZ_SSZK01000004.1"/>
</dbReference>
<dbReference type="PDB" id="1F0K">
    <property type="method" value="X-ray"/>
    <property type="resolution" value="1.90 A"/>
    <property type="chains" value="A/B=1-355"/>
</dbReference>
<dbReference type="PDB" id="1NLM">
    <property type="method" value="X-ray"/>
    <property type="resolution" value="2.50 A"/>
    <property type="chains" value="A/B=2-355"/>
</dbReference>
<dbReference type="PDBsum" id="1F0K"/>
<dbReference type="PDBsum" id="1NLM"/>
<dbReference type="SMR" id="P17443"/>
<dbReference type="BioGRID" id="4261859">
    <property type="interactions" value="585"/>
</dbReference>
<dbReference type="BioGRID" id="850678">
    <property type="interactions" value="1"/>
</dbReference>
<dbReference type="DIP" id="DIP-10282N"/>
<dbReference type="FunCoup" id="P17443">
    <property type="interactions" value="383"/>
</dbReference>
<dbReference type="IntAct" id="P17443">
    <property type="interactions" value="27"/>
</dbReference>
<dbReference type="STRING" id="511145.b0090"/>
<dbReference type="ChEMBL" id="CHEMBL3596078"/>
<dbReference type="DrugBank" id="DB02196">
    <property type="generic name" value="Uridine-Diphosphate-N-Acetylgalactosamine"/>
</dbReference>
<dbReference type="DrugCentral" id="P17443"/>
<dbReference type="SwissLipids" id="SLP:000001814"/>
<dbReference type="CAZy" id="GT28">
    <property type="family name" value="Glycosyltransferase Family 28"/>
</dbReference>
<dbReference type="jPOST" id="P17443"/>
<dbReference type="PaxDb" id="511145-b0090"/>
<dbReference type="EnsemblBacteria" id="AAC73201">
    <property type="protein sequence ID" value="AAC73201"/>
    <property type="gene ID" value="b0090"/>
</dbReference>
<dbReference type="GeneID" id="946321"/>
<dbReference type="KEGG" id="ecj:JW0088"/>
<dbReference type="KEGG" id="eco:b0090"/>
<dbReference type="KEGG" id="ecoc:C3026_00355"/>
<dbReference type="PATRIC" id="fig|1411691.4.peg.2190"/>
<dbReference type="EchoBASE" id="EB0618"/>
<dbReference type="eggNOG" id="COG0707">
    <property type="taxonomic scope" value="Bacteria"/>
</dbReference>
<dbReference type="HOGENOM" id="CLU_037404_2_0_6"/>
<dbReference type="InParanoid" id="P17443"/>
<dbReference type="OMA" id="AADMMLC"/>
<dbReference type="OrthoDB" id="9808936at2"/>
<dbReference type="PhylomeDB" id="P17443"/>
<dbReference type="BioCyc" id="EcoCyc:NACGLCTRANS-MONOMER"/>
<dbReference type="BioCyc" id="MetaCyc:NACGLCTRANS-MONOMER"/>
<dbReference type="BRENDA" id="2.4.1.227">
    <property type="organism ID" value="2026"/>
</dbReference>
<dbReference type="SABIO-RK" id="P17443"/>
<dbReference type="UniPathway" id="UPA00219"/>
<dbReference type="EvolutionaryTrace" id="P17443"/>
<dbReference type="PRO" id="PR:P17443"/>
<dbReference type="Proteomes" id="UP000000625">
    <property type="component" value="Chromosome"/>
</dbReference>
<dbReference type="GO" id="GO:0005886">
    <property type="term" value="C:plasma membrane"/>
    <property type="evidence" value="ECO:0007669"/>
    <property type="project" value="UniProtKB-SubCell"/>
</dbReference>
<dbReference type="GO" id="GO:0051991">
    <property type="term" value="F:UDP-N-acetyl-D-glucosamine:N-acetylmuramoyl-L-alanyl-D-glutamyl-meso-2,6-diaminopimelyl-D-alanyl-D-alanine-diphosphoundecaprenol 4-beta-N-acetylglucosaminlytransferase activity"/>
    <property type="evidence" value="ECO:0007669"/>
    <property type="project" value="RHEA"/>
</dbReference>
<dbReference type="GO" id="GO:0050511">
    <property type="term" value="F:undecaprenyldiphospho-muramoylpentapeptide beta-N-acetylglucosaminyltransferase activity"/>
    <property type="evidence" value="ECO:0000314"/>
    <property type="project" value="EcoliWiki"/>
</dbReference>
<dbReference type="GO" id="GO:0005975">
    <property type="term" value="P:carbohydrate metabolic process"/>
    <property type="evidence" value="ECO:0007669"/>
    <property type="project" value="InterPro"/>
</dbReference>
<dbReference type="GO" id="GO:0051301">
    <property type="term" value="P:cell division"/>
    <property type="evidence" value="ECO:0007669"/>
    <property type="project" value="UniProtKB-KW"/>
</dbReference>
<dbReference type="GO" id="GO:0071555">
    <property type="term" value="P:cell wall organization"/>
    <property type="evidence" value="ECO:0007669"/>
    <property type="project" value="UniProtKB-KW"/>
</dbReference>
<dbReference type="GO" id="GO:0030259">
    <property type="term" value="P:lipid glycosylation"/>
    <property type="evidence" value="ECO:0007669"/>
    <property type="project" value="UniProtKB-UniRule"/>
</dbReference>
<dbReference type="GO" id="GO:0009252">
    <property type="term" value="P:peptidoglycan biosynthetic process"/>
    <property type="evidence" value="ECO:0000315"/>
    <property type="project" value="EcoCyc"/>
</dbReference>
<dbReference type="GO" id="GO:0008360">
    <property type="term" value="P:regulation of cell shape"/>
    <property type="evidence" value="ECO:0007669"/>
    <property type="project" value="UniProtKB-KW"/>
</dbReference>
<dbReference type="CDD" id="cd03785">
    <property type="entry name" value="GT28_MurG"/>
    <property type="match status" value="1"/>
</dbReference>
<dbReference type="FunFam" id="3.40.50.2000:FF:000016">
    <property type="entry name" value="UDP-N-acetylglucosamine--N-acetylmuramyl-(pentapeptide) pyrophosphoryl-undecaprenol N-acetylglucosamine transferase"/>
    <property type="match status" value="1"/>
</dbReference>
<dbReference type="FunFam" id="3.40.50.2000:FF:000018">
    <property type="entry name" value="UDP-N-acetylglucosamine--N-acetylmuramyl-(pentapeptide) pyrophosphoryl-undecaprenol N-acetylglucosamine transferase"/>
    <property type="match status" value="1"/>
</dbReference>
<dbReference type="Gene3D" id="3.40.50.2000">
    <property type="entry name" value="Glycogen Phosphorylase B"/>
    <property type="match status" value="2"/>
</dbReference>
<dbReference type="HAMAP" id="MF_00033">
    <property type="entry name" value="MurG"/>
    <property type="match status" value="1"/>
</dbReference>
<dbReference type="InterPro" id="IPR006009">
    <property type="entry name" value="GlcNAc_MurG"/>
</dbReference>
<dbReference type="InterPro" id="IPR007235">
    <property type="entry name" value="Glyco_trans_28_C"/>
</dbReference>
<dbReference type="InterPro" id="IPR004276">
    <property type="entry name" value="GlycoTrans_28_N"/>
</dbReference>
<dbReference type="NCBIfam" id="TIGR01133">
    <property type="entry name" value="murG"/>
    <property type="match status" value="1"/>
</dbReference>
<dbReference type="PANTHER" id="PTHR21015:SF22">
    <property type="entry name" value="GLYCOSYLTRANSFERASE"/>
    <property type="match status" value="1"/>
</dbReference>
<dbReference type="PANTHER" id="PTHR21015">
    <property type="entry name" value="UDP-N-ACETYLGLUCOSAMINE--N-ACETYLMURAMYL-(PENTAPEPTIDE) PYROPHOSPHORYL-UNDECAPRENOL N-ACETYLGLUCOSAMINE TRANSFERASE 1"/>
    <property type="match status" value="1"/>
</dbReference>
<dbReference type="Pfam" id="PF04101">
    <property type="entry name" value="Glyco_tran_28_C"/>
    <property type="match status" value="1"/>
</dbReference>
<dbReference type="Pfam" id="PF03033">
    <property type="entry name" value="Glyco_transf_28"/>
    <property type="match status" value="1"/>
</dbReference>
<dbReference type="SUPFAM" id="SSF53756">
    <property type="entry name" value="UDP-Glycosyltransferase/glycogen phosphorylase"/>
    <property type="match status" value="1"/>
</dbReference>
<reference key="1">
    <citation type="journal article" date="1990" name="Nucleic Acids Res.">
        <title>Nucleotide sequence involving murG and murC in the mra gene cluster region of Escherichia coli.</title>
        <authorList>
            <person name="Ikeda M."/>
            <person name="Wachi M."/>
            <person name="Jung H.K."/>
            <person name="Ishino F."/>
            <person name="Matsuhashi M."/>
        </authorList>
    </citation>
    <scope>NUCLEOTIDE SEQUENCE [GENOMIC DNA]</scope>
    <source>
        <strain>K12</strain>
    </source>
</reference>
<reference key="2">
    <citation type="journal article" date="1992" name="Nucleic Acids Res.">
        <title>Systematic sequencing of the Escherichia coli genome: analysis of the 0-2.4 min region.</title>
        <authorList>
            <person name="Yura T."/>
            <person name="Mori H."/>
            <person name="Nagai H."/>
            <person name="Nagata T."/>
            <person name="Ishihama A."/>
            <person name="Fujita N."/>
            <person name="Isono K."/>
            <person name="Mizobuchi K."/>
            <person name="Nakata A."/>
        </authorList>
    </citation>
    <scope>NUCLEOTIDE SEQUENCE [LARGE SCALE GENOMIC DNA]</scope>
    <source>
        <strain>K12</strain>
    </source>
</reference>
<reference key="3">
    <citation type="journal article" date="1997" name="Science">
        <title>The complete genome sequence of Escherichia coli K-12.</title>
        <authorList>
            <person name="Blattner F.R."/>
            <person name="Plunkett G. III"/>
            <person name="Bloch C.A."/>
            <person name="Perna N.T."/>
            <person name="Burland V."/>
            <person name="Riley M."/>
            <person name="Collado-Vides J."/>
            <person name="Glasner J.D."/>
            <person name="Rode C.K."/>
            <person name="Mayhew G.F."/>
            <person name="Gregor J."/>
            <person name="Davis N.W."/>
            <person name="Kirkpatrick H.A."/>
            <person name="Goeden M.A."/>
            <person name="Rose D.J."/>
            <person name="Mau B."/>
            <person name="Shao Y."/>
        </authorList>
    </citation>
    <scope>NUCLEOTIDE SEQUENCE [LARGE SCALE GENOMIC DNA]</scope>
    <source>
        <strain>K12 / MG1655 / ATCC 47076</strain>
    </source>
</reference>
<reference key="4">
    <citation type="journal article" date="2006" name="Mol. Syst. Biol.">
        <title>Highly accurate genome sequences of Escherichia coli K-12 strains MG1655 and W3110.</title>
        <authorList>
            <person name="Hayashi K."/>
            <person name="Morooka N."/>
            <person name="Yamamoto Y."/>
            <person name="Fujita K."/>
            <person name="Isono K."/>
            <person name="Choi S."/>
            <person name="Ohtsubo E."/>
            <person name="Baba T."/>
            <person name="Wanner B.L."/>
            <person name="Mori H."/>
            <person name="Horiuchi T."/>
        </authorList>
    </citation>
    <scope>NUCLEOTIDE SEQUENCE [LARGE SCALE GENOMIC DNA]</scope>
    <source>
        <strain>K12 / W3110 / ATCC 27325 / DSM 5911</strain>
    </source>
</reference>
<reference key="5">
    <citation type="journal article" date="1990" name="Nucleic Acids Res.">
        <title>Nucleotide sequence of the cell-envelope murG gene of Escherichia coli.</title>
        <authorList>
            <person name="Mengin-Lecreulx D."/>
            <person name="Texier L."/>
            <person name="van Heijenoort J."/>
        </authorList>
    </citation>
    <scope>NUCLEOTIDE SEQUENCE [GENOMIC DNA] OF 9-355</scope>
    <source>
        <strain>K12</strain>
    </source>
</reference>
<reference key="6">
    <citation type="journal article" date="1991" name="J. Bacteriol.">
        <title>The murG gene of Escherichia coli codes for the UDP-N-acetylglucosamine: N-acetylmuramyl-(pentapeptide) pyrophosphoryl-undecaprenol N-acetylglucosamine transferase involved in the membrane steps of peptidoglycan synthesis.</title>
        <authorList>
            <person name="Mengin-Lecreulx D."/>
            <person name="Texier L."/>
            <person name="Rousseau M."/>
            <person name="van Heijenoort J."/>
        </authorList>
    </citation>
    <scope>PROTEIN SEQUENCE OF 2-18</scope>
    <scope>FUNCTION</scope>
    <scope>CATALYTIC ACTIVITY</scope>
    <scope>PATHWAY</scope>
    <scope>SUBCELLULAR LOCATION</scope>
    <scope>DISRUPTION PHENOTYPE</scope>
</reference>
<reference key="7">
    <citation type="journal article" date="1993" name="J. Bacteriol.">
        <title>The final step of peptidoglycan subunit assembly in Escherichia coli occurs in the cytoplasm.</title>
        <authorList>
            <person name="Bupp K."/>
            <person name="van Heijenoort J."/>
        </authorList>
    </citation>
    <scope>SUBCELLULAR LOCATION</scope>
</reference>
<reference key="8">
    <citation type="journal article" date="1999" name="FEBS Lett.">
        <title>UDP-N-acetylglucosamine:N-acetylmuramoyl-(pentapeptide) pyrophosphoryl undecaprenol N-acetylglucosamine transferase from Escherichia coli: overproduction, solubilization, and purification.</title>
        <authorList>
            <person name="Crouvoisier M."/>
            <person name="Mengin-Lecreulx D."/>
            <person name="van Heijenoort J."/>
        </authorList>
    </citation>
    <scope>CATALYTIC ACTIVITY</scope>
    <source>
        <strain>K12 / ATCC 35607 / JM83</strain>
    </source>
</reference>
<reference key="9">
    <citation type="journal article" date="2007" name="Mol. Microbiol.">
        <title>The essential peptidoglycan glycosyltransferase MurG forms a complex with proteins involved in lateral envelope growth as well as with proteins involved in cell division in Escherichia coli.</title>
        <authorList>
            <person name="Mohammadi T."/>
            <person name="Karczmarek A."/>
            <person name="Crouvoisier M."/>
            <person name="Bouhss A."/>
            <person name="Mengin-Lecreulx D."/>
            <person name="den Blaauwen T."/>
        </authorList>
    </citation>
    <scope>SUBCELLULAR LOCATION</scope>
    <scope>INTERACTION WITH MREB AND MRAY</scope>
</reference>
<reference evidence="8" key="10">
    <citation type="journal article" date="2000" name="Protein Sci.">
        <title>The 1.9 A crystal structure of Escherichia coli MurG, a membrane-associated glycosyltransferase involved in peptidoglycan biosynthesis.</title>
        <authorList>
            <person name="Ha S."/>
            <person name="Walker D."/>
            <person name="Shi Y."/>
            <person name="Walker S."/>
        </authorList>
    </citation>
    <scope>X-RAY CRYSTALLOGRAPHY (1.9 ANGSTROMS)</scope>
</reference>
<reference evidence="9" key="11">
    <citation type="journal article" date="2003" name="Proc. Natl. Acad. Sci. U.S.A.">
        <title>Crystal structure of the MurG:UDP-GlcNAc complex reveals common structural principles of a superfamily of glycosyltransferases.</title>
        <authorList>
            <person name="Hu Y."/>
            <person name="Chen L."/>
            <person name="Ha S."/>
            <person name="Gross B."/>
            <person name="Falcone B."/>
            <person name="Walker D."/>
            <person name="Mokhtarzadeh M."/>
            <person name="Walker S."/>
        </authorList>
    </citation>
    <scope>X-RAY CRYSTALLOGRAPHY (2.50 ANGSTROMS) OF 2-355 IN COMPLEX WITH UDP-N-ACETYL-ALPHA-D-GLUCOSAMINE</scope>
    <scope>FUNCTION</scope>
    <scope>CATALYTIC ACTIVITY</scope>
    <scope>BIOPHYSICOCHEMICAL PROPERTIES</scope>
    <scope>SUBUNIT</scope>
    <scope>MUTAGENESIS OF THR-15; HIS-18; ASN-127; SER-191; GLU-268 AND GLN-288</scope>
</reference>
<feature type="initiator methionine" description="Removed" evidence="4">
    <location>
        <position position="1"/>
    </location>
</feature>
<feature type="chain" id="PRO_0000109170" description="UDP-N-acetylglucosamine--N-acetylmuramyl-(pentapeptide) pyrophosphoryl-undecaprenol N-acetylglucosamine transferase">
    <location>
        <begin position="2"/>
        <end position="355"/>
    </location>
</feature>
<feature type="binding site" evidence="1 3 9">
    <location>
        <begin position="15"/>
        <end position="17"/>
    </location>
    <ligand>
        <name>UDP-N-acetyl-alpha-D-glucosamine</name>
        <dbReference type="ChEBI" id="CHEBI:57705"/>
    </ligand>
</feature>
<feature type="binding site" evidence="1 3 9">
    <location>
        <position position="127"/>
    </location>
    <ligand>
        <name>UDP-N-acetyl-alpha-D-glucosamine</name>
        <dbReference type="ChEBI" id="CHEBI:57705"/>
    </ligand>
</feature>
<feature type="binding site" evidence="1 3 9">
    <location>
        <position position="163"/>
    </location>
    <ligand>
        <name>UDP-N-acetyl-alpha-D-glucosamine</name>
        <dbReference type="ChEBI" id="CHEBI:57705"/>
    </ligand>
</feature>
<feature type="binding site" evidence="1">
    <location>
        <position position="191"/>
    </location>
    <ligand>
        <name>UDP-N-acetyl-alpha-D-glucosamine</name>
        <dbReference type="ChEBI" id="CHEBI:57705"/>
    </ligand>
</feature>
<feature type="binding site" evidence="1 3 9">
    <location>
        <position position="244"/>
    </location>
    <ligand>
        <name>UDP-N-acetyl-alpha-D-glucosamine</name>
        <dbReference type="ChEBI" id="CHEBI:57705"/>
    </ligand>
</feature>
<feature type="binding site" evidence="1 3 9">
    <location>
        <begin position="263"/>
        <end position="268"/>
    </location>
    <ligand>
        <name>UDP-N-acetyl-alpha-D-glucosamine</name>
        <dbReference type="ChEBI" id="CHEBI:57705"/>
    </ligand>
</feature>
<feature type="binding site" evidence="3 9">
    <location>
        <begin position="287"/>
        <end position="288"/>
    </location>
    <ligand>
        <name>UDP-N-acetyl-alpha-D-glucosamine</name>
        <dbReference type="ChEBI" id="CHEBI:57705"/>
    </ligand>
</feature>
<feature type="mutagenesis site" description="387-fold decrease in kcat." evidence="3">
    <original>T</original>
    <variation>A</variation>
    <location>
        <position position="15"/>
    </location>
</feature>
<feature type="mutagenesis site" description="Almost loss of activity." evidence="3">
    <original>H</original>
    <variation>A</variation>
    <location>
        <position position="18"/>
    </location>
</feature>
<feature type="mutagenesis site" description="64-fold decrease in kcat." evidence="3">
    <original>N</original>
    <variation>A</variation>
    <location>
        <position position="127"/>
    </location>
</feature>
<feature type="mutagenesis site" description="40-fold decrease in kcat." evidence="3">
    <original>S</original>
    <variation>A</variation>
    <location>
        <position position="191"/>
    </location>
</feature>
<feature type="mutagenesis site" description="1.6-fold decrease in kcat." evidence="3">
    <original>E</original>
    <variation>A</variation>
    <location>
        <position position="268"/>
    </location>
</feature>
<feature type="mutagenesis site" description="1.4-fold decrease in kcat." evidence="3">
    <original>E</original>
    <variation>D</variation>
    <location>
        <position position="268"/>
    </location>
</feature>
<feature type="mutagenesis site" description="114-fold decrease in kcat." evidence="3">
    <original>Q</original>
    <variation>A</variation>
    <location>
        <position position="288"/>
    </location>
</feature>
<feature type="strand" evidence="10">
    <location>
        <begin position="7"/>
        <end position="11"/>
    </location>
</feature>
<feature type="helix" evidence="10">
    <location>
        <begin position="16"/>
        <end position="30"/>
    </location>
</feature>
<feature type="turn" evidence="10">
    <location>
        <begin position="31"/>
        <end position="33"/>
    </location>
</feature>
<feature type="strand" evidence="10">
    <location>
        <begin position="35"/>
        <end position="40"/>
    </location>
</feature>
<feature type="helix" evidence="10">
    <location>
        <begin position="46"/>
        <end position="49"/>
    </location>
</feature>
<feature type="helix" evidence="10">
    <location>
        <begin position="50"/>
        <end position="53"/>
    </location>
</feature>
<feature type="strand" evidence="10">
    <location>
        <begin position="56"/>
        <end position="59"/>
    </location>
</feature>
<feature type="helix" evidence="11">
    <location>
        <begin position="63"/>
        <end position="65"/>
    </location>
</feature>
<feature type="helix" evidence="10">
    <location>
        <begin position="70"/>
        <end position="74"/>
    </location>
</feature>
<feature type="helix" evidence="10">
    <location>
        <begin position="77"/>
        <end position="94"/>
    </location>
</feature>
<feature type="strand" evidence="10">
    <location>
        <begin position="97"/>
        <end position="101"/>
    </location>
</feature>
<feature type="helix" evidence="10">
    <location>
        <begin position="107"/>
        <end position="116"/>
    </location>
</feature>
<feature type="strand" evidence="10">
    <location>
        <begin position="121"/>
        <end position="125"/>
    </location>
</feature>
<feature type="strand" evidence="10">
    <location>
        <begin position="127"/>
        <end position="129"/>
    </location>
</feature>
<feature type="helix" evidence="10">
    <location>
        <begin position="132"/>
        <end position="137"/>
    </location>
</feature>
<feature type="turn" evidence="10">
    <location>
        <begin position="138"/>
        <end position="140"/>
    </location>
</feature>
<feature type="strand" evidence="10">
    <location>
        <begin position="142"/>
        <end position="148"/>
    </location>
</feature>
<feature type="strand" evidence="10">
    <location>
        <begin position="151"/>
        <end position="154"/>
    </location>
</feature>
<feature type="helix" evidence="10">
    <location>
        <begin position="164"/>
        <end position="167"/>
    </location>
</feature>
<feature type="helix" evidence="10">
    <location>
        <begin position="172"/>
        <end position="176"/>
    </location>
</feature>
<feature type="strand" evidence="10">
    <location>
        <begin position="181"/>
        <end position="188"/>
    </location>
</feature>
<feature type="turn" evidence="10">
    <location>
        <begin position="190"/>
        <end position="192"/>
    </location>
</feature>
<feature type="helix" evidence="10">
    <location>
        <begin position="195"/>
        <end position="208"/>
    </location>
</feature>
<feature type="helix" evidence="10">
    <location>
        <begin position="209"/>
        <end position="211"/>
    </location>
</feature>
<feature type="strand" evidence="10">
    <location>
        <begin position="212"/>
        <end position="217"/>
    </location>
</feature>
<feature type="helix" evidence="10">
    <location>
        <begin position="223"/>
        <end position="232"/>
    </location>
</feature>
<feature type="strand" evidence="10">
    <location>
        <begin position="238"/>
        <end position="242"/>
    </location>
</feature>
<feature type="helix" evidence="10">
    <location>
        <begin position="247"/>
        <end position="253"/>
    </location>
</feature>
<feature type="strand" evidence="10">
    <location>
        <begin position="255"/>
        <end position="259"/>
    </location>
</feature>
<feature type="helix" evidence="10">
    <location>
        <begin position="263"/>
        <end position="272"/>
    </location>
</feature>
<feature type="strand" evidence="10">
    <location>
        <begin position="276"/>
        <end position="278"/>
    </location>
</feature>
<feature type="helix" evidence="10">
    <location>
        <begin position="287"/>
        <end position="297"/>
    </location>
</feature>
<feature type="strand" evidence="10">
    <location>
        <begin position="300"/>
        <end position="303"/>
    </location>
</feature>
<feature type="helix" evidence="10">
    <location>
        <begin position="306"/>
        <end position="308"/>
    </location>
</feature>
<feature type="helix" evidence="10">
    <location>
        <begin position="311"/>
        <end position="319"/>
    </location>
</feature>
<feature type="helix" evidence="10">
    <location>
        <begin position="323"/>
        <end position="335"/>
    </location>
</feature>
<feature type="helix" evidence="10">
    <location>
        <begin position="341"/>
        <end position="353"/>
    </location>
</feature>
<organism>
    <name type="scientific">Escherichia coli (strain K12)</name>
    <dbReference type="NCBI Taxonomy" id="83333"/>
    <lineage>
        <taxon>Bacteria</taxon>
        <taxon>Pseudomonadati</taxon>
        <taxon>Pseudomonadota</taxon>
        <taxon>Gammaproteobacteria</taxon>
        <taxon>Enterobacterales</taxon>
        <taxon>Enterobacteriaceae</taxon>
        <taxon>Escherichia</taxon>
    </lineage>
</organism>